<keyword id="KW-1015">Disulfide bond</keyword>
<keyword id="KW-0872">Ion channel impairing toxin</keyword>
<keyword id="KW-0166">Nematocyst</keyword>
<keyword id="KW-0632">Potassium channel impairing toxin</keyword>
<keyword id="KW-0646">Protease inhibitor</keyword>
<keyword id="KW-0964">Secreted</keyword>
<keyword id="KW-0722">Serine protease inhibitor</keyword>
<keyword id="KW-0732">Signal</keyword>
<keyword id="KW-0800">Toxin</keyword>
<keyword id="KW-1220">Voltage-gated potassium channel impairing toxin</keyword>
<reference key="1">
    <citation type="journal article" date="2009" name="BMC Genomics">
        <title>Comprehensive EST analysis of the symbiotic sea anemone, Anemonia viridis.</title>
        <authorList>
            <person name="Sabourault C."/>
            <person name="Ganot P."/>
            <person name="Deleury E."/>
            <person name="Allemand D."/>
            <person name="Furla P."/>
        </authorList>
    </citation>
    <scope>NUCLEOTIDE SEQUENCE [MRNA]</scope>
</reference>
<reference key="2">
    <citation type="journal article" date="2011" name="BMC Genomics">
        <title>The mining of toxin-like polypeptides from EST database by single residue distribution analysis.</title>
        <authorList>
            <person name="Kozlov S."/>
            <person name="Grishin E."/>
        </authorList>
    </citation>
    <scope>NOMENCLATURE</scope>
</reference>
<reference key="3">
    <citation type="journal article" date="2012" name="Toxicon">
        <title>Development of a rational nomenclature for naming peptide and protein toxins from sea anemones.</title>
        <authorList>
            <person name="Oliveira J.S."/>
            <person name="Fuentes-Silva D."/>
            <person name="King G.F."/>
        </authorList>
    </citation>
    <scope>NOMENCLATURE</scope>
</reference>
<accession>P0DN17</accession>
<sequence>MVFLLCFFLVADVSYGINGDCELPKVVGPCRASHPRYYYNSSSKRCEKFNYGGCRGNANNFHTLEECEKVCGVRSRDSPKEN</sequence>
<feature type="signal peptide" evidence="2">
    <location>
        <begin position="1"/>
        <end position="16"/>
    </location>
</feature>
<feature type="chain" id="PRO_0000433771" description="U-actitoxin-Avd3p">
    <location>
        <begin position="17"/>
        <end position="75"/>
    </location>
</feature>
<feature type="propeptide" id="PRO_0000433772" evidence="2">
    <location>
        <begin position="76"/>
        <end position="82"/>
    </location>
</feature>
<feature type="domain" description="BPTI/Kunitz inhibitor" evidence="4">
    <location>
        <begin position="21"/>
        <end position="71"/>
    </location>
</feature>
<feature type="site" description="Reactive bond" evidence="1">
    <location>
        <begin position="31"/>
        <end position="32"/>
    </location>
</feature>
<feature type="disulfide bond" evidence="4">
    <location>
        <begin position="21"/>
        <end position="71"/>
    </location>
</feature>
<feature type="disulfide bond" evidence="4">
    <location>
        <begin position="30"/>
        <end position="54"/>
    </location>
</feature>
<feature type="disulfide bond" evidence="4">
    <location>
        <begin position="46"/>
        <end position="67"/>
    </location>
</feature>
<protein>
    <recommendedName>
        <fullName evidence="6">U-actitoxin-Avd3p</fullName>
        <shortName evidence="6">U-AITX-Avd3p</shortName>
    </recommendedName>
    <alternativeName>
        <fullName evidence="5">AsKC13</fullName>
    </alternativeName>
</protein>
<comment type="function">
    <text evidence="2 3">Serine protease inhibitor that inhibits both tissue and plasma kallikreins. Has hemolytic activity. Inhibits voltage-gated potassium channels (Kv).</text>
</comment>
<comment type="subcellular location">
    <subcellularLocation>
        <location evidence="7">Secreted</location>
    </subcellularLocation>
    <subcellularLocation>
        <location evidence="7">Nematocyst</location>
    </subcellularLocation>
</comment>
<comment type="similarity">
    <text evidence="7">Belongs to the venom Kunitz-type family. Sea anemone type 2 potassium channel toxin subfamily.</text>
</comment>
<comment type="caution">
    <text evidence="7">Opinions are divided on whether Anemonia viridis (Forsskal, 1775) and Anemonia sulcata (Pennant, 1777) are separate species.</text>
</comment>
<dbReference type="EMBL" id="FK753478">
    <property type="status" value="NOT_ANNOTATED_CDS"/>
    <property type="molecule type" value="mRNA"/>
</dbReference>
<dbReference type="SMR" id="P0DN17"/>
<dbReference type="GO" id="GO:0005576">
    <property type="term" value="C:extracellular region"/>
    <property type="evidence" value="ECO:0007669"/>
    <property type="project" value="UniProtKB-SubCell"/>
</dbReference>
<dbReference type="GO" id="GO:0042151">
    <property type="term" value="C:nematocyst"/>
    <property type="evidence" value="ECO:0007669"/>
    <property type="project" value="UniProtKB-SubCell"/>
</dbReference>
<dbReference type="GO" id="GO:0015459">
    <property type="term" value="F:potassium channel regulator activity"/>
    <property type="evidence" value="ECO:0007669"/>
    <property type="project" value="UniProtKB-KW"/>
</dbReference>
<dbReference type="GO" id="GO:0004867">
    <property type="term" value="F:serine-type endopeptidase inhibitor activity"/>
    <property type="evidence" value="ECO:0007669"/>
    <property type="project" value="UniProtKB-KW"/>
</dbReference>
<dbReference type="GO" id="GO:0090729">
    <property type="term" value="F:toxin activity"/>
    <property type="evidence" value="ECO:0007669"/>
    <property type="project" value="UniProtKB-KW"/>
</dbReference>
<dbReference type="CDD" id="cd22633">
    <property type="entry name" value="Kunitz_actitoxin-like"/>
    <property type="match status" value="1"/>
</dbReference>
<dbReference type="FunFam" id="4.10.410.10:FF:000021">
    <property type="entry name" value="Serine protease inhibitor, putative"/>
    <property type="match status" value="1"/>
</dbReference>
<dbReference type="Gene3D" id="4.10.410.10">
    <property type="entry name" value="Pancreatic trypsin inhibitor Kunitz domain"/>
    <property type="match status" value="1"/>
</dbReference>
<dbReference type="InterPro" id="IPR002223">
    <property type="entry name" value="Kunitz_BPTI"/>
</dbReference>
<dbReference type="InterPro" id="IPR036880">
    <property type="entry name" value="Kunitz_BPTI_sf"/>
</dbReference>
<dbReference type="InterPro" id="IPR020901">
    <property type="entry name" value="Prtase_inh_Kunz-CS"/>
</dbReference>
<dbReference type="InterPro" id="IPR050098">
    <property type="entry name" value="TFPI/VKTCI-like"/>
</dbReference>
<dbReference type="PANTHER" id="PTHR10083:SF374">
    <property type="entry name" value="BPTI_KUNITZ INHIBITOR DOMAIN-CONTAINING PROTEIN"/>
    <property type="match status" value="1"/>
</dbReference>
<dbReference type="PANTHER" id="PTHR10083">
    <property type="entry name" value="KUNITZ-TYPE PROTEASE INHIBITOR-RELATED"/>
    <property type="match status" value="1"/>
</dbReference>
<dbReference type="Pfam" id="PF00014">
    <property type="entry name" value="Kunitz_BPTI"/>
    <property type="match status" value="1"/>
</dbReference>
<dbReference type="PRINTS" id="PR00759">
    <property type="entry name" value="BASICPTASE"/>
</dbReference>
<dbReference type="SMART" id="SM00131">
    <property type="entry name" value="KU"/>
    <property type="match status" value="1"/>
</dbReference>
<dbReference type="SUPFAM" id="SSF57362">
    <property type="entry name" value="BPTI-like"/>
    <property type="match status" value="1"/>
</dbReference>
<dbReference type="PROSITE" id="PS00280">
    <property type="entry name" value="BPTI_KUNITZ_1"/>
    <property type="match status" value="1"/>
</dbReference>
<dbReference type="PROSITE" id="PS50279">
    <property type="entry name" value="BPTI_KUNITZ_2"/>
    <property type="match status" value="1"/>
</dbReference>
<proteinExistence type="inferred from homology"/>
<name>VKTD_ANEVI</name>
<evidence type="ECO:0000250" key="1"/>
<evidence type="ECO:0000250" key="2">
    <source>
        <dbReference type="UniProtKB" id="P10280"/>
    </source>
</evidence>
<evidence type="ECO:0000250" key="3">
    <source>
        <dbReference type="UniProtKB" id="Q9TWF8"/>
    </source>
</evidence>
<evidence type="ECO:0000255" key="4">
    <source>
        <dbReference type="PROSITE-ProRule" id="PRU00031"/>
    </source>
</evidence>
<evidence type="ECO:0000303" key="5">
    <source>
    </source>
</evidence>
<evidence type="ECO:0000303" key="6">
    <source>
    </source>
</evidence>
<evidence type="ECO:0000305" key="7"/>
<organism>
    <name type="scientific">Anemonia viridis</name>
    <name type="common">Snakelocks anemone</name>
    <dbReference type="NCBI Taxonomy" id="51769"/>
    <lineage>
        <taxon>Eukaryota</taxon>
        <taxon>Metazoa</taxon>
        <taxon>Cnidaria</taxon>
        <taxon>Anthozoa</taxon>
        <taxon>Hexacorallia</taxon>
        <taxon>Actiniaria</taxon>
        <taxon>Actiniidae</taxon>
        <taxon>Anemonia</taxon>
    </lineage>
</organism>